<organism>
    <name type="scientific">Arabidopsis thaliana</name>
    <name type="common">Mouse-ear cress</name>
    <dbReference type="NCBI Taxonomy" id="3702"/>
    <lineage>
        <taxon>Eukaryota</taxon>
        <taxon>Viridiplantae</taxon>
        <taxon>Streptophyta</taxon>
        <taxon>Embryophyta</taxon>
        <taxon>Tracheophyta</taxon>
        <taxon>Spermatophyta</taxon>
        <taxon>Magnoliopsida</taxon>
        <taxon>eudicotyledons</taxon>
        <taxon>Gunneridae</taxon>
        <taxon>Pentapetalae</taxon>
        <taxon>rosids</taxon>
        <taxon>malvids</taxon>
        <taxon>Brassicales</taxon>
        <taxon>Brassicaceae</taxon>
        <taxon>Camelineae</taxon>
        <taxon>Arabidopsis</taxon>
    </lineage>
</organism>
<protein>
    <recommendedName>
        <fullName>E3 ubiquitin-protein ligase RMA3</fullName>
        <ecNumber>2.3.2.27</ecNumber>
    </recommendedName>
    <alternativeName>
        <fullName>Protein RING membrane-anchor 3</fullName>
    </alternativeName>
    <alternativeName>
        <fullName evidence="6">RING-type E3 ubiquitin transferase RMA3</fullName>
    </alternativeName>
</protein>
<accession>Q8GUK7</accession>
<accession>Q9SZS2</accession>
<name>RMA3_ARATH</name>
<proteinExistence type="evidence at protein level"/>
<evidence type="ECO:0000255" key="1"/>
<evidence type="ECO:0000255" key="2">
    <source>
        <dbReference type="PROSITE-ProRule" id="PRU00175"/>
    </source>
</evidence>
<evidence type="ECO:0000256" key="3">
    <source>
        <dbReference type="SAM" id="MobiDB-lite"/>
    </source>
</evidence>
<evidence type="ECO:0000269" key="4">
    <source>
    </source>
</evidence>
<evidence type="ECO:0000269" key="5">
    <source>
    </source>
</evidence>
<evidence type="ECO:0000305" key="6"/>
<gene>
    <name type="primary">RMA3</name>
    <name type="ordered locus">At4g27470</name>
    <name type="ORF">F27G19.70</name>
</gene>
<comment type="function">
    <text evidence="4">E3 ubiquitin-protein ligase.</text>
</comment>
<comment type="catalytic activity">
    <reaction>
        <text>S-ubiquitinyl-[E2 ubiquitin-conjugating enzyme]-L-cysteine + [acceptor protein]-L-lysine = [E2 ubiquitin-conjugating enzyme]-L-cysteine + N(6)-ubiquitinyl-[acceptor protein]-L-lysine.</text>
        <dbReference type="EC" id="2.3.2.27"/>
    </reaction>
</comment>
<comment type="pathway">
    <text>Protein modification; protein ubiquitination.</text>
</comment>
<comment type="subcellular location">
    <subcellularLocation>
        <location evidence="4">Endoplasmic reticulum membrane</location>
        <topology evidence="4">Single-pass type IV membrane protein</topology>
    </subcellularLocation>
</comment>
<comment type="tissue specificity">
    <text evidence="4">Ubiquitous. Highly expressed in roots.</text>
</comment>
<comment type="domain">
    <text>The RING-type zinc finger domain is required for E3 ligase activity.</text>
</comment>
<comment type="disruption phenotype">
    <text evidence="5">No visible phenotype and no effect on drought stress response, probably due to the redundancy with RMA1 and RMA2.</text>
</comment>
<comment type="sequence caution" evidence="6">
    <conflict type="erroneous gene model prediction">
        <sequence resource="EMBL-CDS" id="CAB43879"/>
    </conflict>
</comment>
<comment type="sequence caution" evidence="6">
    <conflict type="erroneous gene model prediction">
        <sequence resource="EMBL-CDS" id="CAB81397"/>
    </conflict>
</comment>
<keyword id="KW-0256">Endoplasmic reticulum</keyword>
<keyword id="KW-0472">Membrane</keyword>
<keyword id="KW-0479">Metal-binding</keyword>
<keyword id="KW-1185">Reference proteome</keyword>
<keyword id="KW-0808">Transferase</keyword>
<keyword id="KW-0812">Transmembrane</keyword>
<keyword id="KW-1133">Transmembrane helix</keyword>
<keyword id="KW-0833">Ubl conjugation pathway</keyword>
<keyword id="KW-0862">Zinc</keyword>
<keyword id="KW-0863">Zinc-finger</keyword>
<sequence length="243" mass="26984">MEGNFFIRSDAQRAHDNGFIAKQKPNLTTAPTAGQANESGCFDCNICLDTAHDPVVTLCGHLFCWPCIYKWLHVQLSSVSVDQHQNNCPVCKSNITITSLVPLYGRGMSSPSSTFGSKKQDALSTDIPRRPAPSALRNPITSASSLNPSLQHQTLSPSFHNHQYSPRGFTTTESTDLANAVMMSFLYPVIGMFGDLVYTRIFGTFTNTIAQPYQSQRMMQREKSLNRVSIFFLCCIILCLLLF</sequence>
<reference key="1">
    <citation type="journal article" date="2005" name="Plant Physiol.">
        <title>Functional analysis of the RING-type ubiquitin ligase family of Arabidopsis.</title>
        <authorList>
            <person name="Stone S.L."/>
            <person name="Hauksdottir H."/>
            <person name="Troy A."/>
            <person name="Herschleb J."/>
            <person name="Kraft E."/>
            <person name="Callis J."/>
        </authorList>
    </citation>
    <scope>NUCLEOTIDE SEQUENCE [MRNA]</scope>
    <source>
        <tissue>Leaf</tissue>
    </source>
</reference>
<reference key="2">
    <citation type="journal article" date="1999" name="Nature">
        <title>Sequence and analysis of chromosome 4 of the plant Arabidopsis thaliana.</title>
        <authorList>
            <person name="Mayer K.F.X."/>
            <person name="Schueller C."/>
            <person name="Wambutt R."/>
            <person name="Murphy G."/>
            <person name="Volckaert G."/>
            <person name="Pohl T."/>
            <person name="Duesterhoeft A."/>
            <person name="Stiekema W."/>
            <person name="Entian K.-D."/>
            <person name="Terryn N."/>
            <person name="Harris B."/>
            <person name="Ansorge W."/>
            <person name="Brandt P."/>
            <person name="Grivell L.A."/>
            <person name="Rieger M."/>
            <person name="Weichselgartner M."/>
            <person name="de Simone V."/>
            <person name="Obermaier B."/>
            <person name="Mache R."/>
            <person name="Mueller M."/>
            <person name="Kreis M."/>
            <person name="Delseny M."/>
            <person name="Puigdomenech P."/>
            <person name="Watson M."/>
            <person name="Schmidtheini T."/>
            <person name="Reichert B."/>
            <person name="Portetelle D."/>
            <person name="Perez-Alonso M."/>
            <person name="Boutry M."/>
            <person name="Bancroft I."/>
            <person name="Vos P."/>
            <person name="Hoheisel J."/>
            <person name="Zimmermann W."/>
            <person name="Wedler H."/>
            <person name="Ridley P."/>
            <person name="Langham S.-A."/>
            <person name="McCullagh B."/>
            <person name="Bilham L."/>
            <person name="Robben J."/>
            <person name="van der Schueren J."/>
            <person name="Grymonprez B."/>
            <person name="Chuang Y.-J."/>
            <person name="Vandenbussche F."/>
            <person name="Braeken M."/>
            <person name="Weltjens I."/>
            <person name="Voet M."/>
            <person name="Bastiaens I."/>
            <person name="Aert R."/>
            <person name="Defoor E."/>
            <person name="Weitzenegger T."/>
            <person name="Bothe G."/>
            <person name="Ramsperger U."/>
            <person name="Hilbert H."/>
            <person name="Braun M."/>
            <person name="Holzer E."/>
            <person name="Brandt A."/>
            <person name="Peters S."/>
            <person name="van Staveren M."/>
            <person name="Dirkse W."/>
            <person name="Mooijman P."/>
            <person name="Klein Lankhorst R."/>
            <person name="Rose M."/>
            <person name="Hauf J."/>
            <person name="Koetter P."/>
            <person name="Berneiser S."/>
            <person name="Hempel S."/>
            <person name="Feldpausch M."/>
            <person name="Lamberth S."/>
            <person name="Van den Daele H."/>
            <person name="De Keyser A."/>
            <person name="Buysshaert C."/>
            <person name="Gielen J."/>
            <person name="Villarroel R."/>
            <person name="De Clercq R."/>
            <person name="van Montagu M."/>
            <person name="Rogers J."/>
            <person name="Cronin A."/>
            <person name="Quail M.A."/>
            <person name="Bray-Allen S."/>
            <person name="Clark L."/>
            <person name="Doggett J."/>
            <person name="Hall S."/>
            <person name="Kay M."/>
            <person name="Lennard N."/>
            <person name="McLay K."/>
            <person name="Mayes R."/>
            <person name="Pettett A."/>
            <person name="Rajandream M.A."/>
            <person name="Lyne M."/>
            <person name="Benes V."/>
            <person name="Rechmann S."/>
            <person name="Borkova D."/>
            <person name="Bloecker H."/>
            <person name="Scharfe M."/>
            <person name="Grimm M."/>
            <person name="Loehnert T.-H."/>
            <person name="Dose S."/>
            <person name="de Haan M."/>
            <person name="Maarse A.C."/>
            <person name="Schaefer M."/>
            <person name="Mueller-Auer S."/>
            <person name="Gabel C."/>
            <person name="Fuchs M."/>
            <person name="Fartmann B."/>
            <person name="Granderath K."/>
            <person name="Dauner D."/>
            <person name="Herzl A."/>
            <person name="Neumann S."/>
            <person name="Argiriou A."/>
            <person name="Vitale D."/>
            <person name="Liguori R."/>
            <person name="Piravandi E."/>
            <person name="Massenet O."/>
            <person name="Quigley F."/>
            <person name="Clabauld G."/>
            <person name="Muendlein A."/>
            <person name="Felber R."/>
            <person name="Schnabl S."/>
            <person name="Hiller R."/>
            <person name="Schmidt W."/>
            <person name="Lecharny A."/>
            <person name="Aubourg S."/>
            <person name="Chefdor F."/>
            <person name="Cooke R."/>
            <person name="Berger C."/>
            <person name="Monfort A."/>
            <person name="Casacuberta E."/>
            <person name="Gibbons T."/>
            <person name="Weber N."/>
            <person name="Vandenbol M."/>
            <person name="Bargues M."/>
            <person name="Terol J."/>
            <person name="Torres A."/>
            <person name="Perez-Perez A."/>
            <person name="Purnelle B."/>
            <person name="Bent E."/>
            <person name="Johnson S."/>
            <person name="Tacon D."/>
            <person name="Jesse T."/>
            <person name="Heijnen L."/>
            <person name="Schwarz S."/>
            <person name="Scholler P."/>
            <person name="Heber S."/>
            <person name="Francs P."/>
            <person name="Bielke C."/>
            <person name="Frishman D."/>
            <person name="Haase D."/>
            <person name="Lemcke K."/>
            <person name="Mewes H.-W."/>
            <person name="Stocker S."/>
            <person name="Zaccaria P."/>
            <person name="Bevan M."/>
            <person name="Wilson R.K."/>
            <person name="de la Bastide M."/>
            <person name="Habermann K."/>
            <person name="Parnell L."/>
            <person name="Dedhia N."/>
            <person name="Gnoj L."/>
            <person name="Schutz K."/>
            <person name="Huang E."/>
            <person name="Spiegel L."/>
            <person name="Sekhon M."/>
            <person name="Murray J."/>
            <person name="Sheet P."/>
            <person name="Cordes M."/>
            <person name="Abu-Threideh J."/>
            <person name="Stoneking T."/>
            <person name="Kalicki J."/>
            <person name="Graves T."/>
            <person name="Harmon G."/>
            <person name="Edwards J."/>
            <person name="Latreille P."/>
            <person name="Courtney L."/>
            <person name="Cloud J."/>
            <person name="Abbott A."/>
            <person name="Scott K."/>
            <person name="Johnson D."/>
            <person name="Minx P."/>
            <person name="Bentley D."/>
            <person name="Fulton B."/>
            <person name="Miller N."/>
            <person name="Greco T."/>
            <person name="Kemp K."/>
            <person name="Kramer J."/>
            <person name="Fulton L."/>
            <person name="Mardis E."/>
            <person name="Dante M."/>
            <person name="Pepin K."/>
            <person name="Hillier L.W."/>
            <person name="Nelson J."/>
            <person name="Spieth J."/>
            <person name="Ryan E."/>
            <person name="Andrews S."/>
            <person name="Geisel C."/>
            <person name="Layman D."/>
            <person name="Du H."/>
            <person name="Ali J."/>
            <person name="Berghoff A."/>
            <person name="Jones K."/>
            <person name="Drone K."/>
            <person name="Cotton M."/>
            <person name="Joshu C."/>
            <person name="Antonoiu B."/>
            <person name="Zidanic M."/>
            <person name="Strong C."/>
            <person name="Sun H."/>
            <person name="Lamar B."/>
            <person name="Yordan C."/>
            <person name="Ma P."/>
            <person name="Zhong J."/>
            <person name="Preston R."/>
            <person name="Vil D."/>
            <person name="Shekher M."/>
            <person name="Matero A."/>
            <person name="Shah R."/>
            <person name="Swaby I.K."/>
            <person name="O'Shaughnessy A."/>
            <person name="Rodriguez M."/>
            <person name="Hoffman J."/>
            <person name="Till S."/>
            <person name="Granat S."/>
            <person name="Shohdy N."/>
            <person name="Hasegawa A."/>
            <person name="Hameed A."/>
            <person name="Lodhi M."/>
            <person name="Johnson A."/>
            <person name="Chen E."/>
            <person name="Marra M.A."/>
            <person name="Martienssen R."/>
            <person name="McCombie W.R."/>
        </authorList>
    </citation>
    <scope>NUCLEOTIDE SEQUENCE [LARGE SCALE GENOMIC DNA]</scope>
    <source>
        <strain>cv. Columbia</strain>
    </source>
</reference>
<reference key="3">
    <citation type="journal article" date="2017" name="Plant J.">
        <title>Araport11: a complete reannotation of the Arabidopsis thaliana reference genome.</title>
        <authorList>
            <person name="Cheng C.Y."/>
            <person name="Krishnakumar V."/>
            <person name="Chan A.P."/>
            <person name="Thibaud-Nissen F."/>
            <person name="Schobel S."/>
            <person name="Town C.D."/>
        </authorList>
    </citation>
    <scope>GENOME REANNOTATION</scope>
    <source>
        <strain>cv. Columbia</strain>
    </source>
</reference>
<reference key="4">
    <citation type="journal article" date="2003" name="Science">
        <title>Empirical analysis of transcriptional activity in the Arabidopsis genome.</title>
        <authorList>
            <person name="Yamada K."/>
            <person name="Lim J."/>
            <person name="Dale J.M."/>
            <person name="Chen H."/>
            <person name="Shinn P."/>
            <person name="Palm C.J."/>
            <person name="Southwick A.M."/>
            <person name="Wu H.C."/>
            <person name="Kim C.J."/>
            <person name="Nguyen M."/>
            <person name="Pham P.K."/>
            <person name="Cheuk R.F."/>
            <person name="Karlin-Newmann G."/>
            <person name="Liu S.X."/>
            <person name="Lam B."/>
            <person name="Sakano H."/>
            <person name="Wu T."/>
            <person name="Yu G."/>
            <person name="Miranda M."/>
            <person name="Quach H.L."/>
            <person name="Tripp M."/>
            <person name="Chang C.H."/>
            <person name="Lee J.M."/>
            <person name="Toriumi M.J."/>
            <person name="Chan M.M."/>
            <person name="Tang C.C."/>
            <person name="Onodera C.S."/>
            <person name="Deng J.M."/>
            <person name="Akiyama K."/>
            <person name="Ansari Y."/>
            <person name="Arakawa T."/>
            <person name="Banh J."/>
            <person name="Banno F."/>
            <person name="Bowser L."/>
            <person name="Brooks S.Y."/>
            <person name="Carninci P."/>
            <person name="Chao Q."/>
            <person name="Choy N."/>
            <person name="Enju A."/>
            <person name="Goldsmith A.D."/>
            <person name="Gurjal M."/>
            <person name="Hansen N.F."/>
            <person name="Hayashizaki Y."/>
            <person name="Johnson-Hopson C."/>
            <person name="Hsuan V.W."/>
            <person name="Iida K."/>
            <person name="Karnes M."/>
            <person name="Khan S."/>
            <person name="Koesema E."/>
            <person name="Ishida J."/>
            <person name="Jiang P.X."/>
            <person name="Jones T."/>
            <person name="Kawai J."/>
            <person name="Kamiya A."/>
            <person name="Meyers C."/>
            <person name="Nakajima M."/>
            <person name="Narusaka M."/>
            <person name="Seki M."/>
            <person name="Sakurai T."/>
            <person name="Satou M."/>
            <person name="Tamse R."/>
            <person name="Vaysberg M."/>
            <person name="Wallender E.K."/>
            <person name="Wong C."/>
            <person name="Yamamura Y."/>
            <person name="Yuan S."/>
            <person name="Shinozaki K."/>
            <person name="Davis R.W."/>
            <person name="Theologis A."/>
            <person name="Ecker J.R."/>
        </authorList>
    </citation>
    <scope>NUCLEOTIDE SEQUENCE [LARGE SCALE MRNA]</scope>
    <source>
        <strain>cv. Columbia</strain>
    </source>
</reference>
<reference key="5">
    <citation type="journal article" date="2009" name="Plant Cell Rep.">
        <title>Characterization of three Arabidopsis homologs of human RING membrane anchor E3 ubiquitin ligase.</title>
        <authorList>
            <person name="Son O."/>
            <person name="Cho S.K."/>
            <person name="Kim E.Y."/>
            <person name="Kim W.T."/>
        </authorList>
    </citation>
    <scope>FUNCTION</scope>
    <scope>MUTAGENESIS OF CYS-59</scope>
    <scope>SUBCELLULAR LOCATION</scope>
    <scope>TISSUE SPECIFICITY</scope>
</reference>
<reference key="6">
    <citation type="journal article" date="2009" name="Plant Cell">
        <title>Drought stress-induced Rma1H1, a RING membrane-anchor E3 ubiquitin ligase homolog, regulates aquaporin levels via ubiquitination in transgenic Arabidopsis plants.</title>
        <authorList>
            <person name="Lee H.K."/>
            <person name="Cho S.K."/>
            <person name="Son O."/>
            <person name="Xu Z."/>
            <person name="Hwang I."/>
            <person name="Kim W.T."/>
        </authorList>
    </citation>
    <scope>DISRUPTION PHENOTYPE</scope>
</reference>
<feature type="chain" id="PRO_0000395675" description="E3 ubiquitin-protein ligase RMA3">
    <location>
        <begin position="1"/>
        <end position="243"/>
    </location>
</feature>
<feature type="transmembrane region" description="Helical; Anchor for type IV membrane protein" evidence="1">
    <location>
        <begin position="223"/>
        <end position="243"/>
    </location>
</feature>
<feature type="zinc finger region" description="RING-type" evidence="2">
    <location>
        <begin position="44"/>
        <end position="92"/>
    </location>
</feature>
<feature type="region of interest" description="Disordered" evidence="3">
    <location>
        <begin position="110"/>
        <end position="135"/>
    </location>
</feature>
<feature type="mutagenesis site" description="Strong reduction of ubiquitin ligase activity." evidence="4">
    <original>C</original>
    <variation>S</variation>
    <location>
        <position position="59"/>
    </location>
</feature>
<dbReference type="EC" id="2.3.2.27"/>
<dbReference type="EMBL" id="DQ059124">
    <property type="protein sequence ID" value="AAY57610.1"/>
    <property type="molecule type" value="mRNA"/>
</dbReference>
<dbReference type="EMBL" id="AL078467">
    <property type="protein sequence ID" value="CAB43879.1"/>
    <property type="status" value="ALT_SEQ"/>
    <property type="molecule type" value="Genomic_DNA"/>
</dbReference>
<dbReference type="EMBL" id="AL161571">
    <property type="protein sequence ID" value="CAB81397.1"/>
    <property type="status" value="ALT_SEQ"/>
    <property type="molecule type" value="Genomic_DNA"/>
</dbReference>
<dbReference type="EMBL" id="CP002687">
    <property type="protein sequence ID" value="AEE85346.1"/>
    <property type="molecule type" value="Genomic_DNA"/>
</dbReference>
<dbReference type="EMBL" id="BT002429">
    <property type="protein sequence ID" value="AAO00789.1"/>
    <property type="molecule type" value="mRNA"/>
</dbReference>
<dbReference type="EMBL" id="BT006285">
    <property type="protein sequence ID" value="AAP13393.1"/>
    <property type="molecule type" value="mRNA"/>
</dbReference>
<dbReference type="PIR" id="T08939">
    <property type="entry name" value="T08939"/>
</dbReference>
<dbReference type="RefSeq" id="NP_194477.2">
    <property type="nucleotide sequence ID" value="NM_118882.3"/>
</dbReference>
<dbReference type="SMR" id="Q8GUK7"/>
<dbReference type="FunCoup" id="Q8GUK7">
    <property type="interactions" value="67"/>
</dbReference>
<dbReference type="STRING" id="3702.Q8GUK7"/>
<dbReference type="TCDB" id="3.A.16.1.5">
    <property type="family name" value="the endoplasmic reticular retrotranslocon (er-rt) family"/>
</dbReference>
<dbReference type="PaxDb" id="3702-AT4G27470.1"/>
<dbReference type="EnsemblPlants" id="AT4G27470.1">
    <property type="protein sequence ID" value="AT4G27470.1"/>
    <property type="gene ID" value="AT4G27470"/>
</dbReference>
<dbReference type="GeneID" id="828856"/>
<dbReference type="Gramene" id="AT4G27470.1">
    <property type="protein sequence ID" value="AT4G27470.1"/>
    <property type="gene ID" value="AT4G27470"/>
</dbReference>
<dbReference type="KEGG" id="ath:AT4G27470"/>
<dbReference type="Araport" id="AT4G27470"/>
<dbReference type="TAIR" id="AT4G27470">
    <property type="gene designation" value="RMA3"/>
</dbReference>
<dbReference type="eggNOG" id="KOG0823">
    <property type="taxonomic scope" value="Eukaryota"/>
</dbReference>
<dbReference type="HOGENOM" id="CLU_055198_1_0_1"/>
<dbReference type="InParanoid" id="Q8GUK7"/>
<dbReference type="OMA" id="KWNQISA"/>
<dbReference type="PhylomeDB" id="Q8GUK7"/>
<dbReference type="BRENDA" id="2.3.2.27">
    <property type="organism ID" value="399"/>
</dbReference>
<dbReference type="UniPathway" id="UPA00143"/>
<dbReference type="PRO" id="PR:Q8GUK7"/>
<dbReference type="Proteomes" id="UP000006548">
    <property type="component" value="Chromosome 4"/>
</dbReference>
<dbReference type="ExpressionAtlas" id="Q8GUK7">
    <property type="expression patterns" value="baseline and differential"/>
</dbReference>
<dbReference type="GO" id="GO:0005783">
    <property type="term" value="C:endoplasmic reticulum"/>
    <property type="evidence" value="ECO:0000314"/>
    <property type="project" value="TAIR"/>
</dbReference>
<dbReference type="GO" id="GO:0005789">
    <property type="term" value="C:endoplasmic reticulum membrane"/>
    <property type="evidence" value="ECO:0007669"/>
    <property type="project" value="UniProtKB-SubCell"/>
</dbReference>
<dbReference type="GO" id="GO:0061630">
    <property type="term" value="F:ubiquitin protein ligase activity"/>
    <property type="evidence" value="ECO:0007669"/>
    <property type="project" value="InterPro"/>
</dbReference>
<dbReference type="GO" id="GO:0004842">
    <property type="term" value="F:ubiquitin-protein transferase activity"/>
    <property type="evidence" value="ECO:0000314"/>
    <property type="project" value="TAIR"/>
</dbReference>
<dbReference type="GO" id="GO:0008270">
    <property type="term" value="F:zinc ion binding"/>
    <property type="evidence" value="ECO:0007669"/>
    <property type="project" value="UniProtKB-KW"/>
</dbReference>
<dbReference type="GO" id="GO:0071456">
    <property type="term" value="P:cellular response to hypoxia"/>
    <property type="evidence" value="ECO:0007007"/>
    <property type="project" value="TAIR"/>
</dbReference>
<dbReference type="GO" id="GO:0016567">
    <property type="term" value="P:protein ubiquitination"/>
    <property type="evidence" value="ECO:0007669"/>
    <property type="project" value="UniProtKB-UniPathway"/>
</dbReference>
<dbReference type="GO" id="GO:0006511">
    <property type="term" value="P:ubiquitin-dependent protein catabolic process"/>
    <property type="evidence" value="ECO:0007669"/>
    <property type="project" value="InterPro"/>
</dbReference>
<dbReference type="CDD" id="cd16745">
    <property type="entry name" value="RING-HC_AtRMA-like"/>
    <property type="match status" value="1"/>
</dbReference>
<dbReference type="Gene3D" id="3.30.40.10">
    <property type="entry name" value="Zinc/RING finger domain, C3HC4 (zinc finger)"/>
    <property type="match status" value="1"/>
</dbReference>
<dbReference type="InterPro" id="IPR045103">
    <property type="entry name" value="RNF5/RNF185-like"/>
</dbReference>
<dbReference type="InterPro" id="IPR018957">
    <property type="entry name" value="Znf_C3HC4_RING-type"/>
</dbReference>
<dbReference type="InterPro" id="IPR001841">
    <property type="entry name" value="Znf_RING"/>
</dbReference>
<dbReference type="InterPro" id="IPR013083">
    <property type="entry name" value="Znf_RING/FYVE/PHD"/>
</dbReference>
<dbReference type="InterPro" id="IPR017907">
    <property type="entry name" value="Znf_RING_CS"/>
</dbReference>
<dbReference type="PANTHER" id="PTHR12313">
    <property type="entry name" value="E3 UBIQUITIN-PROTEIN LIGASE RNF5-RELATED"/>
    <property type="match status" value="1"/>
</dbReference>
<dbReference type="Pfam" id="PF00097">
    <property type="entry name" value="zf-C3HC4"/>
    <property type="match status" value="1"/>
</dbReference>
<dbReference type="SMART" id="SM00184">
    <property type="entry name" value="RING"/>
    <property type="match status" value="1"/>
</dbReference>
<dbReference type="SUPFAM" id="SSF57850">
    <property type="entry name" value="RING/U-box"/>
    <property type="match status" value="1"/>
</dbReference>
<dbReference type="PROSITE" id="PS00518">
    <property type="entry name" value="ZF_RING_1"/>
    <property type="match status" value="1"/>
</dbReference>
<dbReference type="PROSITE" id="PS50089">
    <property type="entry name" value="ZF_RING_2"/>
    <property type="match status" value="1"/>
</dbReference>